<dbReference type="EC" id="6.3.4.5" evidence="1"/>
<dbReference type="EMBL" id="CP001068">
    <property type="protein sequence ID" value="ACD27952.1"/>
    <property type="molecule type" value="Genomic_DNA"/>
</dbReference>
<dbReference type="SMR" id="B2UBA3"/>
<dbReference type="STRING" id="402626.Rpic_2829"/>
<dbReference type="KEGG" id="rpi:Rpic_2829"/>
<dbReference type="eggNOG" id="COG0137">
    <property type="taxonomic scope" value="Bacteria"/>
</dbReference>
<dbReference type="HOGENOM" id="CLU_032784_4_1_4"/>
<dbReference type="UniPathway" id="UPA00068">
    <property type="reaction ID" value="UER00113"/>
</dbReference>
<dbReference type="GO" id="GO:0005737">
    <property type="term" value="C:cytoplasm"/>
    <property type="evidence" value="ECO:0007669"/>
    <property type="project" value="UniProtKB-SubCell"/>
</dbReference>
<dbReference type="GO" id="GO:0004055">
    <property type="term" value="F:argininosuccinate synthase activity"/>
    <property type="evidence" value="ECO:0007669"/>
    <property type="project" value="UniProtKB-UniRule"/>
</dbReference>
<dbReference type="GO" id="GO:0005524">
    <property type="term" value="F:ATP binding"/>
    <property type="evidence" value="ECO:0007669"/>
    <property type="project" value="UniProtKB-UniRule"/>
</dbReference>
<dbReference type="GO" id="GO:0042803">
    <property type="term" value="F:protein homodimerization activity"/>
    <property type="evidence" value="ECO:0007669"/>
    <property type="project" value="InterPro"/>
</dbReference>
<dbReference type="GO" id="GO:0000053">
    <property type="term" value="P:argininosuccinate metabolic process"/>
    <property type="evidence" value="ECO:0007669"/>
    <property type="project" value="TreeGrafter"/>
</dbReference>
<dbReference type="GO" id="GO:0006526">
    <property type="term" value="P:L-arginine biosynthetic process"/>
    <property type="evidence" value="ECO:0007669"/>
    <property type="project" value="UniProtKB-UniRule"/>
</dbReference>
<dbReference type="GO" id="GO:0000050">
    <property type="term" value="P:urea cycle"/>
    <property type="evidence" value="ECO:0007669"/>
    <property type="project" value="TreeGrafter"/>
</dbReference>
<dbReference type="CDD" id="cd01999">
    <property type="entry name" value="ASS"/>
    <property type="match status" value="1"/>
</dbReference>
<dbReference type="FunFam" id="1.10.287.400:FF:000001">
    <property type="entry name" value="Argininosuccinate synthase"/>
    <property type="match status" value="1"/>
</dbReference>
<dbReference type="Gene3D" id="1.10.287.400">
    <property type="match status" value="1"/>
</dbReference>
<dbReference type="Gene3D" id="3.90.1260.10">
    <property type="entry name" value="Argininosuccinate synthetase, chain A, domain 2"/>
    <property type="match status" value="1"/>
</dbReference>
<dbReference type="Gene3D" id="3.40.50.620">
    <property type="entry name" value="HUPs"/>
    <property type="match status" value="1"/>
</dbReference>
<dbReference type="HAMAP" id="MF_00581">
    <property type="entry name" value="Arg_succ_synth_type2"/>
    <property type="match status" value="1"/>
</dbReference>
<dbReference type="InterPro" id="IPR023437">
    <property type="entry name" value="Arg_succ_synth_type2_subfam"/>
</dbReference>
<dbReference type="InterPro" id="IPR048268">
    <property type="entry name" value="Arginosuc_syn_C"/>
</dbReference>
<dbReference type="InterPro" id="IPR048267">
    <property type="entry name" value="Arginosuc_syn_N"/>
</dbReference>
<dbReference type="InterPro" id="IPR001518">
    <property type="entry name" value="Arginosuc_synth"/>
</dbReference>
<dbReference type="InterPro" id="IPR018223">
    <property type="entry name" value="Arginosuc_synth_CS"/>
</dbReference>
<dbReference type="InterPro" id="IPR023434">
    <property type="entry name" value="Arginosuc_synth_type_1_subfam"/>
</dbReference>
<dbReference type="InterPro" id="IPR024074">
    <property type="entry name" value="AS_cat/multimer_dom_body"/>
</dbReference>
<dbReference type="InterPro" id="IPR024073">
    <property type="entry name" value="AS_multimer_C_tail"/>
</dbReference>
<dbReference type="InterPro" id="IPR014729">
    <property type="entry name" value="Rossmann-like_a/b/a_fold"/>
</dbReference>
<dbReference type="NCBIfam" id="TIGR00032">
    <property type="entry name" value="argG"/>
    <property type="match status" value="1"/>
</dbReference>
<dbReference type="NCBIfam" id="NF003779">
    <property type="entry name" value="PRK05370.1"/>
    <property type="match status" value="1"/>
</dbReference>
<dbReference type="PANTHER" id="PTHR11587">
    <property type="entry name" value="ARGININOSUCCINATE SYNTHASE"/>
    <property type="match status" value="1"/>
</dbReference>
<dbReference type="PANTHER" id="PTHR11587:SF2">
    <property type="entry name" value="ARGININOSUCCINATE SYNTHASE"/>
    <property type="match status" value="1"/>
</dbReference>
<dbReference type="Pfam" id="PF20979">
    <property type="entry name" value="Arginosuc_syn_C"/>
    <property type="match status" value="1"/>
</dbReference>
<dbReference type="Pfam" id="PF00764">
    <property type="entry name" value="Arginosuc_synth"/>
    <property type="match status" value="1"/>
</dbReference>
<dbReference type="SUPFAM" id="SSF52402">
    <property type="entry name" value="Adenine nucleotide alpha hydrolases-like"/>
    <property type="match status" value="1"/>
</dbReference>
<dbReference type="SUPFAM" id="SSF69864">
    <property type="entry name" value="Argininosuccinate synthetase, C-terminal domain"/>
    <property type="match status" value="1"/>
</dbReference>
<dbReference type="PROSITE" id="PS00564">
    <property type="entry name" value="ARGININOSUCCIN_SYN_1"/>
    <property type="match status" value="1"/>
</dbReference>
<dbReference type="PROSITE" id="PS00565">
    <property type="entry name" value="ARGININOSUCCIN_SYN_2"/>
    <property type="match status" value="1"/>
</dbReference>
<feature type="chain" id="PRO_1000129760" description="Argininosuccinate synthase">
    <location>
        <begin position="1"/>
        <end position="445"/>
    </location>
</feature>
<feature type="binding site" evidence="1">
    <location>
        <begin position="17"/>
        <end position="25"/>
    </location>
    <ligand>
        <name>ATP</name>
        <dbReference type="ChEBI" id="CHEBI:30616"/>
    </ligand>
</feature>
<feature type="binding site" evidence="1">
    <location>
        <position position="43"/>
    </location>
    <ligand>
        <name>ATP</name>
        <dbReference type="ChEBI" id="CHEBI:30616"/>
    </ligand>
</feature>
<feature type="binding site" evidence="1">
    <location>
        <position position="99"/>
    </location>
    <ligand>
        <name>L-citrulline</name>
        <dbReference type="ChEBI" id="CHEBI:57743"/>
    </ligand>
</feature>
<feature type="binding site" evidence="1">
    <location>
        <position position="129"/>
    </location>
    <ligand>
        <name>ATP</name>
        <dbReference type="ChEBI" id="CHEBI:30616"/>
    </ligand>
</feature>
<feature type="binding site" evidence="1">
    <location>
        <position position="131"/>
    </location>
    <ligand>
        <name>ATP</name>
        <dbReference type="ChEBI" id="CHEBI:30616"/>
    </ligand>
</feature>
<feature type="binding site" evidence="1">
    <location>
        <position position="131"/>
    </location>
    <ligand>
        <name>L-aspartate</name>
        <dbReference type="ChEBI" id="CHEBI:29991"/>
    </ligand>
</feature>
<feature type="binding site" evidence="1">
    <location>
        <position position="135"/>
    </location>
    <ligand>
        <name>L-aspartate</name>
        <dbReference type="ChEBI" id="CHEBI:29991"/>
    </ligand>
</feature>
<feature type="binding site" evidence="1">
    <location>
        <position position="135"/>
    </location>
    <ligand>
        <name>L-citrulline</name>
        <dbReference type="ChEBI" id="CHEBI:57743"/>
    </ligand>
</feature>
<feature type="binding site" evidence="1">
    <location>
        <position position="136"/>
    </location>
    <ligand>
        <name>ATP</name>
        <dbReference type="ChEBI" id="CHEBI:30616"/>
    </ligand>
</feature>
<feature type="binding site" evidence="1">
    <location>
        <position position="136"/>
    </location>
    <ligand>
        <name>L-aspartate</name>
        <dbReference type="ChEBI" id="CHEBI:29991"/>
    </ligand>
</feature>
<feature type="binding site" evidence="1">
    <location>
        <position position="139"/>
    </location>
    <ligand>
        <name>L-citrulline</name>
        <dbReference type="ChEBI" id="CHEBI:57743"/>
    </ligand>
</feature>
<feature type="binding site" evidence="1">
    <location>
        <position position="192"/>
    </location>
    <ligand>
        <name>L-citrulline</name>
        <dbReference type="ChEBI" id="CHEBI:57743"/>
    </ligand>
</feature>
<feature type="binding site" evidence="1">
    <location>
        <position position="194"/>
    </location>
    <ligand>
        <name>ATP</name>
        <dbReference type="ChEBI" id="CHEBI:30616"/>
    </ligand>
</feature>
<feature type="binding site" evidence="1">
    <location>
        <position position="201"/>
    </location>
    <ligand>
        <name>L-citrulline</name>
        <dbReference type="ChEBI" id="CHEBI:57743"/>
    </ligand>
</feature>
<feature type="binding site" evidence="1">
    <location>
        <position position="203"/>
    </location>
    <ligand>
        <name>L-citrulline</name>
        <dbReference type="ChEBI" id="CHEBI:57743"/>
    </ligand>
</feature>
<feature type="binding site" evidence="1">
    <location>
        <position position="280"/>
    </location>
    <ligand>
        <name>L-citrulline</name>
        <dbReference type="ChEBI" id="CHEBI:57743"/>
    </ligand>
</feature>
<name>ASSY_RALPJ</name>
<comment type="catalytic activity">
    <reaction evidence="1">
        <text>L-citrulline + L-aspartate + ATP = 2-(N(omega)-L-arginino)succinate + AMP + diphosphate + H(+)</text>
        <dbReference type="Rhea" id="RHEA:10932"/>
        <dbReference type="ChEBI" id="CHEBI:15378"/>
        <dbReference type="ChEBI" id="CHEBI:29991"/>
        <dbReference type="ChEBI" id="CHEBI:30616"/>
        <dbReference type="ChEBI" id="CHEBI:33019"/>
        <dbReference type="ChEBI" id="CHEBI:57472"/>
        <dbReference type="ChEBI" id="CHEBI:57743"/>
        <dbReference type="ChEBI" id="CHEBI:456215"/>
        <dbReference type="EC" id="6.3.4.5"/>
    </reaction>
</comment>
<comment type="pathway">
    <text evidence="1">Amino-acid biosynthesis; L-arginine biosynthesis; L-arginine from L-ornithine and carbamoyl phosphate: step 2/3.</text>
</comment>
<comment type="subunit">
    <text evidence="1">Homotetramer.</text>
</comment>
<comment type="subcellular location">
    <subcellularLocation>
        <location evidence="1">Cytoplasm</location>
    </subcellularLocation>
</comment>
<comment type="similarity">
    <text evidence="1">Belongs to the argininosuccinate synthase family. Type 2 subfamily.</text>
</comment>
<keyword id="KW-0028">Amino-acid biosynthesis</keyword>
<keyword id="KW-0055">Arginine biosynthesis</keyword>
<keyword id="KW-0067">ATP-binding</keyword>
<keyword id="KW-0963">Cytoplasm</keyword>
<keyword id="KW-0436">Ligase</keyword>
<keyword id="KW-0547">Nucleotide-binding</keyword>
<accession>B2UBA3</accession>
<protein>
    <recommendedName>
        <fullName evidence="1">Argininosuccinate synthase</fullName>
        <ecNumber evidence="1">6.3.4.5</ecNumber>
    </recommendedName>
    <alternativeName>
        <fullName evidence="1">Citrulline--aspartate ligase</fullName>
    </alternativeName>
</protein>
<reference key="1">
    <citation type="submission" date="2008-05" db="EMBL/GenBank/DDBJ databases">
        <title>Complete sequence of chromosome 1 of Ralstonia pickettii 12J.</title>
        <authorList>
            <person name="Lucas S."/>
            <person name="Copeland A."/>
            <person name="Lapidus A."/>
            <person name="Glavina del Rio T."/>
            <person name="Dalin E."/>
            <person name="Tice H."/>
            <person name="Bruce D."/>
            <person name="Goodwin L."/>
            <person name="Pitluck S."/>
            <person name="Meincke L."/>
            <person name="Brettin T."/>
            <person name="Detter J.C."/>
            <person name="Han C."/>
            <person name="Kuske C.R."/>
            <person name="Schmutz J."/>
            <person name="Larimer F."/>
            <person name="Land M."/>
            <person name="Hauser L."/>
            <person name="Kyrpides N."/>
            <person name="Mikhailova N."/>
            <person name="Marsh T."/>
            <person name="Richardson P."/>
        </authorList>
    </citation>
    <scope>NUCLEOTIDE SEQUENCE [LARGE SCALE GENOMIC DNA]</scope>
    <source>
        <strain>12J</strain>
    </source>
</reference>
<sequence length="445" mass="49292">METILQHVPVGQKVGIAFSGGLDTSAALRWMKNKGALPYAYTANLGQPDEEDYDAIPRKAMEYGAEKARLIDCRPQLANEGIAAIQSGAFHISTGGITYFNTTPLGRAVTGTMLVAAMKEDDVNIWGDGSTFKGNDIERFYRYGLLTNPALKIYKPWLDQAFIDELGGRAEMSAFMTKEGFGYKMSAEKAYSTDSNMLGATHEAKDLEHLNSGIRIVNPIMGVAFWKPEVEVKAEEVSITFDEGRPVAVNGREIADPVEMFLELNRIGGRHGLGMSDQIENRIIEAKSRGIYEAPGMALLHIAYERLVTGIHNEDTIEQYRINGLRLGRLLYQGRWFDPQAIMLRETAQRWVARAVTGTVTLELRRGNDYSILNTESPNLTYAPERLSMEKVEDAPFSPADRIGQLTMRNLDLMDTRDKLAIYSKAGLLSLGTANALPQLDGGKK</sequence>
<gene>
    <name evidence="1" type="primary">argG</name>
    <name type="ordered locus">Rpic_2829</name>
</gene>
<proteinExistence type="inferred from homology"/>
<evidence type="ECO:0000255" key="1">
    <source>
        <dbReference type="HAMAP-Rule" id="MF_00581"/>
    </source>
</evidence>
<organism>
    <name type="scientific">Ralstonia pickettii (strain 12J)</name>
    <dbReference type="NCBI Taxonomy" id="402626"/>
    <lineage>
        <taxon>Bacteria</taxon>
        <taxon>Pseudomonadati</taxon>
        <taxon>Pseudomonadota</taxon>
        <taxon>Betaproteobacteria</taxon>
        <taxon>Burkholderiales</taxon>
        <taxon>Burkholderiaceae</taxon>
        <taxon>Ralstonia</taxon>
    </lineage>
</organism>